<reference key="1">
    <citation type="journal article" date="2003" name="Nature">
        <title>Genome divergence in two Prochlorococcus ecotypes reflects oceanic niche differentiation.</title>
        <authorList>
            <person name="Rocap G."/>
            <person name="Larimer F.W."/>
            <person name="Lamerdin J.E."/>
            <person name="Malfatti S."/>
            <person name="Chain P."/>
            <person name="Ahlgren N.A."/>
            <person name="Arellano A."/>
            <person name="Coleman M."/>
            <person name="Hauser L."/>
            <person name="Hess W.R."/>
            <person name="Johnson Z.I."/>
            <person name="Land M.L."/>
            <person name="Lindell D."/>
            <person name="Post A.F."/>
            <person name="Regala W."/>
            <person name="Shah M."/>
            <person name="Shaw S.L."/>
            <person name="Steglich C."/>
            <person name="Sullivan M.B."/>
            <person name="Ting C.S."/>
            <person name="Tolonen A."/>
            <person name="Webb E.A."/>
            <person name="Zinser E.R."/>
            <person name="Chisholm S.W."/>
        </authorList>
    </citation>
    <scope>NUCLEOTIDE SEQUENCE [LARGE SCALE GENOMIC DNA]</scope>
    <source>
        <strain>MIT 9313</strain>
    </source>
</reference>
<dbReference type="EC" id="2.1.3.15" evidence="1"/>
<dbReference type="EMBL" id="BX548175">
    <property type="protein sequence ID" value="CAE21404.1"/>
    <property type="molecule type" value="Genomic_DNA"/>
</dbReference>
<dbReference type="RefSeq" id="WP_011130598.1">
    <property type="nucleotide sequence ID" value="NC_005071.1"/>
</dbReference>
<dbReference type="SMR" id="Q7V6D6"/>
<dbReference type="KEGG" id="pmt:PMT_1229"/>
<dbReference type="eggNOG" id="COG0825">
    <property type="taxonomic scope" value="Bacteria"/>
</dbReference>
<dbReference type="HOGENOM" id="CLU_015486_0_2_3"/>
<dbReference type="OrthoDB" id="9808023at2"/>
<dbReference type="UniPathway" id="UPA00655">
    <property type="reaction ID" value="UER00711"/>
</dbReference>
<dbReference type="Proteomes" id="UP000001423">
    <property type="component" value="Chromosome"/>
</dbReference>
<dbReference type="GO" id="GO:0009317">
    <property type="term" value="C:acetyl-CoA carboxylase complex"/>
    <property type="evidence" value="ECO:0007669"/>
    <property type="project" value="InterPro"/>
</dbReference>
<dbReference type="GO" id="GO:0003989">
    <property type="term" value="F:acetyl-CoA carboxylase activity"/>
    <property type="evidence" value="ECO:0007669"/>
    <property type="project" value="InterPro"/>
</dbReference>
<dbReference type="GO" id="GO:0005524">
    <property type="term" value="F:ATP binding"/>
    <property type="evidence" value="ECO:0007669"/>
    <property type="project" value="UniProtKB-KW"/>
</dbReference>
<dbReference type="GO" id="GO:0016743">
    <property type="term" value="F:carboxyl- or carbamoyltransferase activity"/>
    <property type="evidence" value="ECO:0007669"/>
    <property type="project" value="UniProtKB-UniRule"/>
</dbReference>
<dbReference type="GO" id="GO:0006633">
    <property type="term" value="P:fatty acid biosynthetic process"/>
    <property type="evidence" value="ECO:0007669"/>
    <property type="project" value="UniProtKB-KW"/>
</dbReference>
<dbReference type="GO" id="GO:2001295">
    <property type="term" value="P:malonyl-CoA biosynthetic process"/>
    <property type="evidence" value="ECO:0007669"/>
    <property type="project" value="UniProtKB-UniRule"/>
</dbReference>
<dbReference type="Gene3D" id="3.90.226.10">
    <property type="entry name" value="2-enoyl-CoA Hydratase, Chain A, domain 1"/>
    <property type="match status" value="1"/>
</dbReference>
<dbReference type="HAMAP" id="MF_00823">
    <property type="entry name" value="AcetylCoA_CT_alpha"/>
    <property type="match status" value="1"/>
</dbReference>
<dbReference type="InterPro" id="IPR001095">
    <property type="entry name" value="Acetyl_CoA_COase_a_su"/>
</dbReference>
<dbReference type="InterPro" id="IPR029045">
    <property type="entry name" value="ClpP/crotonase-like_dom_sf"/>
</dbReference>
<dbReference type="InterPro" id="IPR011763">
    <property type="entry name" value="COA_CT_C"/>
</dbReference>
<dbReference type="NCBIfam" id="TIGR00513">
    <property type="entry name" value="accA"/>
    <property type="match status" value="1"/>
</dbReference>
<dbReference type="NCBIfam" id="NF041504">
    <property type="entry name" value="AccA_sub"/>
    <property type="match status" value="1"/>
</dbReference>
<dbReference type="NCBIfam" id="NF004344">
    <property type="entry name" value="PRK05724.1"/>
    <property type="match status" value="1"/>
</dbReference>
<dbReference type="PANTHER" id="PTHR42853">
    <property type="entry name" value="ACETYL-COENZYME A CARBOXYLASE CARBOXYL TRANSFERASE SUBUNIT ALPHA"/>
    <property type="match status" value="1"/>
</dbReference>
<dbReference type="PANTHER" id="PTHR42853:SF3">
    <property type="entry name" value="ACETYL-COENZYME A CARBOXYLASE CARBOXYL TRANSFERASE SUBUNIT ALPHA, CHLOROPLASTIC"/>
    <property type="match status" value="1"/>
</dbReference>
<dbReference type="Pfam" id="PF03255">
    <property type="entry name" value="ACCA"/>
    <property type="match status" value="1"/>
</dbReference>
<dbReference type="PRINTS" id="PR01069">
    <property type="entry name" value="ACCCTRFRASEA"/>
</dbReference>
<dbReference type="SUPFAM" id="SSF52096">
    <property type="entry name" value="ClpP/crotonase"/>
    <property type="match status" value="1"/>
</dbReference>
<dbReference type="PROSITE" id="PS50989">
    <property type="entry name" value="COA_CT_CTER"/>
    <property type="match status" value="1"/>
</dbReference>
<protein>
    <recommendedName>
        <fullName evidence="1">Acetyl-coenzyme A carboxylase carboxyl transferase subunit alpha</fullName>
        <shortName evidence="1">ACCase subunit alpha</shortName>
        <shortName evidence="1">Acetyl-CoA carboxylase carboxyltransferase subunit alpha</shortName>
        <ecNumber evidence="1">2.1.3.15</ecNumber>
    </recommendedName>
</protein>
<proteinExistence type="inferred from homology"/>
<feature type="chain" id="PRO_0000223802" description="Acetyl-coenzyme A carboxylase carboxyl transferase subunit alpha">
    <location>
        <begin position="1"/>
        <end position="329"/>
    </location>
</feature>
<feature type="domain" description="CoA carboxyltransferase C-terminal" evidence="2">
    <location>
        <begin position="40"/>
        <end position="294"/>
    </location>
</feature>
<keyword id="KW-0067">ATP-binding</keyword>
<keyword id="KW-0963">Cytoplasm</keyword>
<keyword id="KW-0275">Fatty acid biosynthesis</keyword>
<keyword id="KW-0276">Fatty acid metabolism</keyword>
<keyword id="KW-0444">Lipid biosynthesis</keyword>
<keyword id="KW-0443">Lipid metabolism</keyword>
<keyword id="KW-0547">Nucleotide-binding</keyword>
<keyword id="KW-1185">Reference proteome</keyword>
<keyword id="KW-0808">Transferase</keyword>
<accession>Q7V6D6</accession>
<organism>
    <name type="scientific">Prochlorococcus marinus (strain MIT 9313)</name>
    <dbReference type="NCBI Taxonomy" id="74547"/>
    <lineage>
        <taxon>Bacteria</taxon>
        <taxon>Bacillati</taxon>
        <taxon>Cyanobacteriota</taxon>
        <taxon>Cyanophyceae</taxon>
        <taxon>Synechococcales</taxon>
        <taxon>Prochlorococcaceae</taxon>
        <taxon>Prochlorococcus</taxon>
    </lineage>
</organism>
<comment type="function">
    <text evidence="1">Component of the acetyl coenzyme A carboxylase (ACC) complex. First, biotin carboxylase catalyzes the carboxylation of biotin on its carrier protein (BCCP) and then the CO(2) group is transferred by the carboxyltransferase to acetyl-CoA to form malonyl-CoA.</text>
</comment>
<comment type="catalytic activity">
    <reaction evidence="1">
        <text>N(6)-carboxybiotinyl-L-lysyl-[protein] + acetyl-CoA = N(6)-biotinyl-L-lysyl-[protein] + malonyl-CoA</text>
        <dbReference type="Rhea" id="RHEA:54728"/>
        <dbReference type="Rhea" id="RHEA-COMP:10505"/>
        <dbReference type="Rhea" id="RHEA-COMP:10506"/>
        <dbReference type="ChEBI" id="CHEBI:57288"/>
        <dbReference type="ChEBI" id="CHEBI:57384"/>
        <dbReference type="ChEBI" id="CHEBI:83144"/>
        <dbReference type="ChEBI" id="CHEBI:83145"/>
        <dbReference type="EC" id="2.1.3.15"/>
    </reaction>
</comment>
<comment type="pathway">
    <text evidence="1">Lipid metabolism; malonyl-CoA biosynthesis; malonyl-CoA from acetyl-CoA: step 1/1.</text>
</comment>
<comment type="subunit">
    <text evidence="1">Acetyl-CoA carboxylase is a heterohexamer composed of biotin carboxyl carrier protein (AccB), biotin carboxylase (AccC) and two subunits each of ACCase subunit alpha (AccA) and ACCase subunit beta (AccD).</text>
</comment>
<comment type="subcellular location">
    <subcellularLocation>
        <location evidence="1">Cytoplasm</location>
    </subcellularLocation>
</comment>
<comment type="similarity">
    <text evidence="1">Belongs to the AccA family.</text>
</comment>
<sequence>MARRYLFEFEKPLVELEQQIEQIRELARDSEVDVSQQLLQLETLAARRREEIFQALTPAEKIQVARHPHRPSTLDFIQMFCDDWVELHGDRRGSDDQALVGGVGRIGKRSVLLIGHQKGRDTKENVARNFGMATPGGYRKALRLMDHADRFRLPILTFIDTPGAYAGLLAEEQGQGEAIAVNLREMFRLRVPVIATVIGEGGSGGALGIGVADRLLMFEHSVYTVASPEACASILWRDAAKAPEAAAALKITGPDLLNLGVVDEVLPEPAGGNNWAPLQAGEVLREAIERHLDELLGLKVNQLREARYRKFRAMGRVLDPSSSETGLPA</sequence>
<evidence type="ECO:0000255" key="1">
    <source>
        <dbReference type="HAMAP-Rule" id="MF_00823"/>
    </source>
</evidence>
<evidence type="ECO:0000255" key="2">
    <source>
        <dbReference type="PROSITE-ProRule" id="PRU01137"/>
    </source>
</evidence>
<name>ACCA_PROMM</name>
<gene>
    <name evidence="1" type="primary">accA</name>
    <name type="ordered locus">PMT_1229</name>
</gene>